<accession>A8GL60</accession>
<name>ILVD_SERP5</name>
<comment type="function">
    <text evidence="1">Functions in the biosynthesis of branched-chain amino acids. Catalyzes the dehydration of (2R,3R)-2,3-dihydroxy-3-methylpentanoate (2,3-dihydroxy-3-methylvalerate) into 2-oxo-3-methylpentanoate (2-oxo-3-methylvalerate) and of (2R)-2,3-dihydroxy-3-methylbutanoate (2,3-dihydroxyisovalerate) into 2-oxo-3-methylbutanoate (2-oxoisovalerate), the penultimate precursor to L-isoleucine and L-valine, respectively.</text>
</comment>
<comment type="catalytic activity">
    <reaction evidence="1">
        <text>(2R)-2,3-dihydroxy-3-methylbutanoate = 3-methyl-2-oxobutanoate + H2O</text>
        <dbReference type="Rhea" id="RHEA:24809"/>
        <dbReference type="ChEBI" id="CHEBI:11851"/>
        <dbReference type="ChEBI" id="CHEBI:15377"/>
        <dbReference type="ChEBI" id="CHEBI:49072"/>
        <dbReference type="EC" id="4.2.1.9"/>
    </reaction>
    <physiologicalReaction direction="left-to-right" evidence="1">
        <dbReference type="Rhea" id="RHEA:24810"/>
    </physiologicalReaction>
</comment>
<comment type="catalytic activity">
    <reaction evidence="1">
        <text>(2R,3R)-2,3-dihydroxy-3-methylpentanoate = (S)-3-methyl-2-oxopentanoate + H2O</text>
        <dbReference type="Rhea" id="RHEA:27694"/>
        <dbReference type="ChEBI" id="CHEBI:15377"/>
        <dbReference type="ChEBI" id="CHEBI:35146"/>
        <dbReference type="ChEBI" id="CHEBI:49258"/>
        <dbReference type="EC" id="4.2.1.9"/>
    </reaction>
    <physiologicalReaction direction="left-to-right" evidence="1">
        <dbReference type="Rhea" id="RHEA:27695"/>
    </physiologicalReaction>
</comment>
<comment type="cofactor">
    <cofactor evidence="1">
        <name>[2Fe-2S] cluster</name>
        <dbReference type="ChEBI" id="CHEBI:190135"/>
    </cofactor>
    <text evidence="1">Binds 1 [2Fe-2S] cluster per subunit. This cluster acts as a Lewis acid cofactor.</text>
</comment>
<comment type="cofactor">
    <cofactor evidence="1">
        <name>Mg(2+)</name>
        <dbReference type="ChEBI" id="CHEBI:18420"/>
    </cofactor>
</comment>
<comment type="pathway">
    <text evidence="1">Amino-acid biosynthesis; L-isoleucine biosynthesis; L-isoleucine from 2-oxobutanoate: step 3/4.</text>
</comment>
<comment type="pathway">
    <text evidence="1">Amino-acid biosynthesis; L-valine biosynthesis; L-valine from pyruvate: step 3/4.</text>
</comment>
<comment type="subunit">
    <text evidence="1">Homodimer.</text>
</comment>
<comment type="similarity">
    <text evidence="1">Belongs to the IlvD/Edd family.</text>
</comment>
<protein>
    <recommendedName>
        <fullName evidence="1">Dihydroxy-acid dehydratase</fullName>
        <shortName evidence="1">DAD</shortName>
        <ecNumber evidence="1">4.2.1.9</ecNumber>
    </recommendedName>
</protein>
<organism>
    <name type="scientific">Serratia proteamaculans (strain 568)</name>
    <dbReference type="NCBI Taxonomy" id="399741"/>
    <lineage>
        <taxon>Bacteria</taxon>
        <taxon>Pseudomonadati</taxon>
        <taxon>Pseudomonadota</taxon>
        <taxon>Gammaproteobacteria</taxon>
        <taxon>Enterobacterales</taxon>
        <taxon>Yersiniaceae</taxon>
        <taxon>Serratia</taxon>
    </lineage>
</organism>
<evidence type="ECO:0000255" key="1">
    <source>
        <dbReference type="HAMAP-Rule" id="MF_00012"/>
    </source>
</evidence>
<reference key="1">
    <citation type="submission" date="2007-09" db="EMBL/GenBank/DDBJ databases">
        <title>Complete sequence of chromosome of Serratia proteamaculans 568.</title>
        <authorList>
            <consortium name="US DOE Joint Genome Institute"/>
            <person name="Copeland A."/>
            <person name="Lucas S."/>
            <person name="Lapidus A."/>
            <person name="Barry K."/>
            <person name="Glavina del Rio T."/>
            <person name="Dalin E."/>
            <person name="Tice H."/>
            <person name="Pitluck S."/>
            <person name="Chain P."/>
            <person name="Malfatti S."/>
            <person name="Shin M."/>
            <person name="Vergez L."/>
            <person name="Schmutz J."/>
            <person name="Larimer F."/>
            <person name="Land M."/>
            <person name="Hauser L."/>
            <person name="Kyrpides N."/>
            <person name="Kim E."/>
            <person name="Taghavi S."/>
            <person name="Newman L."/>
            <person name="Vangronsveld J."/>
            <person name="van der Lelie D."/>
            <person name="Richardson P."/>
        </authorList>
    </citation>
    <scope>NUCLEOTIDE SEQUENCE [LARGE SCALE GENOMIC DNA]</scope>
    <source>
        <strain>568</strain>
    </source>
</reference>
<feature type="chain" id="PRO_1000089413" description="Dihydroxy-acid dehydratase">
    <location>
        <begin position="1"/>
        <end position="616"/>
    </location>
</feature>
<feature type="active site" description="Proton acceptor" evidence="1">
    <location>
        <position position="517"/>
    </location>
</feature>
<feature type="binding site" evidence="1">
    <location>
        <position position="81"/>
    </location>
    <ligand>
        <name>Mg(2+)</name>
        <dbReference type="ChEBI" id="CHEBI:18420"/>
    </ligand>
</feature>
<feature type="binding site" evidence="1">
    <location>
        <position position="122"/>
    </location>
    <ligand>
        <name>[2Fe-2S] cluster</name>
        <dbReference type="ChEBI" id="CHEBI:190135"/>
    </ligand>
</feature>
<feature type="binding site" evidence="1">
    <location>
        <position position="123"/>
    </location>
    <ligand>
        <name>Mg(2+)</name>
        <dbReference type="ChEBI" id="CHEBI:18420"/>
    </ligand>
</feature>
<feature type="binding site" description="via carbamate group" evidence="1">
    <location>
        <position position="124"/>
    </location>
    <ligand>
        <name>Mg(2+)</name>
        <dbReference type="ChEBI" id="CHEBI:18420"/>
    </ligand>
</feature>
<feature type="binding site" evidence="1">
    <location>
        <position position="195"/>
    </location>
    <ligand>
        <name>[2Fe-2S] cluster</name>
        <dbReference type="ChEBI" id="CHEBI:190135"/>
    </ligand>
</feature>
<feature type="binding site" evidence="1">
    <location>
        <position position="491"/>
    </location>
    <ligand>
        <name>Mg(2+)</name>
        <dbReference type="ChEBI" id="CHEBI:18420"/>
    </ligand>
</feature>
<feature type="modified residue" description="N6-carboxylysine" evidence="1">
    <location>
        <position position="124"/>
    </location>
</feature>
<dbReference type="EC" id="4.2.1.9" evidence="1"/>
<dbReference type="EMBL" id="CP000826">
    <property type="protein sequence ID" value="ABV43850.1"/>
    <property type="molecule type" value="Genomic_DNA"/>
</dbReference>
<dbReference type="SMR" id="A8GL60"/>
<dbReference type="STRING" id="399741.Spro_4757"/>
<dbReference type="KEGG" id="spe:Spro_4757"/>
<dbReference type="eggNOG" id="COG0129">
    <property type="taxonomic scope" value="Bacteria"/>
</dbReference>
<dbReference type="HOGENOM" id="CLU_014271_4_3_6"/>
<dbReference type="OrthoDB" id="9807077at2"/>
<dbReference type="UniPathway" id="UPA00047">
    <property type="reaction ID" value="UER00057"/>
</dbReference>
<dbReference type="UniPathway" id="UPA00049">
    <property type="reaction ID" value="UER00061"/>
</dbReference>
<dbReference type="GO" id="GO:0005829">
    <property type="term" value="C:cytosol"/>
    <property type="evidence" value="ECO:0007669"/>
    <property type="project" value="TreeGrafter"/>
</dbReference>
<dbReference type="GO" id="GO:0051537">
    <property type="term" value="F:2 iron, 2 sulfur cluster binding"/>
    <property type="evidence" value="ECO:0007669"/>
    <property type="project" value="UniProtKB-UniRule"/>
</dbReference>
<dbReference type="GO" id="GO:0004160">
    <property type="term" value="F:dihydroxy-acid dehydratase activity"/>
    <property type="evidence" value="ECO:0007669"/>
    <property type="project" value="UniProtKB-UniRule"/>
</dbReference>
<dbReference type="GO" id="GO:0000287">
    <property type="term" value="F:magnesium ion binding"/>
    <property type="evidence" value="ECO:0007669"/>
    <property type="project" value="UniProtKB-UniRule"/>
</dbReference>
<dbReference type="GO" id="GO:0009097">
    <property type="term" value="P:isoleucine biosynthetic process"/>
    <property type="evidence" value="ECO:0007669"/>
    <property type="project" value="UniProtKB-UniRule"/>
</dbReference>
<dbReference type="GO" id="GO:0009099">
    <property type="term" value="P:L-valine biosynthetic process"/>
    <property type="evidence" value="ECO:0007669"/>
    <property type="project" value="UniProtKB-UniRule"/>
</dbReference>
<dbReference type="FunFam" id="3.50.30.80:FF:000001">
    <property type="entry name" value="Dihydroxy-acid dehydratase"/>
    <property type="match status" value="1"/>
</dbReference>
<dbReference type="Gene3D" id="3.50.30.80">
    <property type="entry name" value="IlvD/EDD C-terminal domain-like"/>
    <property type="match status" value="1"/>
</dbReference>
<dbReference type="HAMAP" id="MF_00012">
    <property type="entry name" value="IlvD"/>
    <property type="match status" value="1"/>
</dbReference>
<dbReference type="InterPro" id="IPR042096">
    <property type="entry name" value="Dihydro-acid_dehy_C"/>
</dbReference>
<dbReference type="InterPro" id="IPR004404">
    <property type="entry name" value="DihydroxyA_deHydtase"/>
</dbReference>
<dbReference type="InterPro" id="IPR020558">
    <property type="entry name" value="DiOHA_6PGluconate_deHydtase_CS"/>
</dbReference>
<dbReference type="InterPro" id="IPR056740">
    <property type="entry name" value="ILV_EDD_C"/>
</dbReference>
<dbReference type="InterPro" id="IPR000581">
    <property type="entry name" value="ILV_EDD_N"/>
</dbReference>
<dbReference type="InterPro" id="IPR037237">
    <property type="entry name" value="IlvD/EDD_N"/>
</dbReference>
<dbReference type="NCBIfam" id="TIGR00110">
    <property type="entry name" value="ilvD"/>
    <property type="match status" value="1"/>
</dbReference>
<dbReference type="NCBIfam" id="NF009103">
    <property type="entry name" value="PRK12448.1"/>
    <property type="match status" value="1"/>
</dbReference>
<dbReference type="PANTHER" id="PTHR43661">
    <property type="entry name" value="D-XYLONATE DEHYDRATASE"/>
    <property type="match status" value="1"/>
</dbReference>
<dbReference type="PANTHER" id="PTHR43661:SF3">
    <property type="entry name" value="D-XYLONATE DEHYDRATASE YAGF-RELATED"/>
    <property type="match status" value="1"/>
</dbReference>
<dbReference type="Pfam" id="PF24877">
    <property type="entry name" value="ILV_EDD_C"/>
    <property type="match status" value="1"/>
</dbReference>
<dbReference type="Pfam" id="PF00920">
    <property type="entry name" value="ILVD_EDD_N"/>
    <property type="match status" value="1"/>
</dbReference>
<dbReference type="SUPFAM" id="SSF143975">
    <property type="entry name" value="IlvD/EDD N-terminal domain-like"/>
    <property type="match status" value="1"/>
</dbReference>
<dbReference type="SUPFAM" id="SSF52016">
    <property type="entry name" value="LeuD/IlvD-like"/>
    <property type="match status" value="1"/>
</dbReference>
<dbReference type="PROSITE" id="PS00886">
    <property type="entry name" value="ILVD_EDD_1"/>
    <property type="match status" value="1"/>
</dbReference>
<dbReference type="PROSITE" id="PS00887">
    <property type="entry name" value="ILVD_EDD_2"/>
    <property type="match status" value="1"/>
</dbReference>
<keyword id="KW-0001">2Fe-2S</keyword>
<keyword id="KW-0028">Amino-acid biosynthesis</keyword>
<keyword id="KW-0100">Branched-chain amino acid biosynthesis</keyword>
<keyword id="KW-0408">Iron</keyword>
<keyword id="KW-0411">Iron-sulfur</keyword>
<keyword id="KW-0456">Lyase</keyword>
<keyword id="KW-0460">Magnesium</keyword>
<keyword id="KW-0479">Metal-binding</keyword>
<sequence>MPKYRSATTTHGRNMAGARALWRATGMTDDDFGKPIIAVVNSFTQFVPGHVHLRDLGKLVAEQIEASGGVAKEFNTIAVDDGIAMGHGGMLYSLPSRELIADSVEYMVNAHCADAMVCISNCDKITPGMLMASLRLNIPVIFVSGGPMEAGKTKLSDKIIKLDLIDAMIQGANPNVSDADSAQIERSACPTCGSCSGMFTANSMNCLTEALGLSQPGNGSLLATHADRKDLFLNAGKRIVALTKRYYEQDDESALPRSIANKAAFENAMTLDIAMGGSTNTVLHLLAAAQEGEIDFTMEDIDRLSRKVPHLCKVAPSTQKYHMEDVHRAGGVLAILGELDRAGLMNRDVDNILGLKLTETLNQYDIMLTQDEAVKKMFRAGPAGIRTTQAFSQDCRWDTLDDDRAEGCIRSLENAFSLEGGLAVLYGNMALDGSIVKTAGVDKDNLTFRGPAKVYESQDTAVEAILGGKVVAGDVVVIRYEGPKGGPGMQEMLYPTTYLKSMGLGKACALITDGRFSGGTSGLSIGHVSPEAGSGGLIALIEDGDMIDIDIPKRSMVLDVSDSELAARREVELARGDRAWTPKNRERQVSFALRAYATLATSADKGAVRDKSKLGG</sequence>
<gene>
    <name evidence="1" type="primary">ilvD</name>
    <name type="ordered locus">Spro_4757</name>
</gene>
<proteinExistence type="inferred from homology"/>